<reference key="1">
    <citation type="journal article" date="2005" name="BMC Genomics">
        <title>Bacterial genome adaptation to niches: divergence of the potential virulence genes in three Burkholderia species of different survival strategies.</title>
        <authorList>
            <person name="Kim H.S."/>
            <person name="Schell M.A."/>
            <person name="Yu Y."/>
            <person name="Ulrich R.L."/>
            <person name="Sarria S.H."/>
            <person name="Nierman W.C."/>
            <person name="DeShazer D."/>
        </authorList>
    </citation>
    <scope>NUCLEOTIDE SEQUENCE [LARGE SCALE GENOMIC DNA]</scope>
    <source>
        <strain>ATCC 700388 / DSM 13276 / CCUG 48851 / CIP 106301 / E264</strain>
    </source>
</reference>
<keyword id="KW-0004">4Fe-4S</keyword>
<keyword id="KW-0408">Iron</keyword>
<keyword id="KW-0411">Iron-sulfur</keyword>
<keyword id="KW-0479">Metal-binding</keyword>
<keyword id="KW-0489">Methyltransferase</keyword>
<keyword id="KW-0698">rRNA processing</keyword>
<keyword id="KW-0949">S-adenosyl-L-methionine</keyword>
<keyword id="KW-0808">Transferase</keyword>
<gene>
    <name evidence="1" type="primary">rlmD</name>
    <name type="synonym">rumA</name>
    <name type="ordered locus">BTH_I2229</name>
</gene>
<feature type="chain" id="PRO_0000282035" description="23S rRNA (uracil(1939)-C(5))-methyltransferase RlmD">
    <location>
        <begin position="1"/>
        <end position="465"/>
    </location>
</feature>
<feature type="domain" description="TRAM" evidence="1">
    <location>
        <begin position="12"/>
        <end position="80"/>
    </location>
</feature>
<feature type="region of interest" description="Disordered" evidence="2">
    <location>
        <begin position="1"/>
        <end position="20"/>
    </location>
</feature>
<feature type="active site" description="Nucleophile" evidence="1">
    <location>
        <position position="421"/>
    </location>
</feature>
<feature type="binding site" evidence="1">
    <location>
        <position position="93"/>
    </location>
    <ligand>
        <name>[4Fe-4S] cluster</name>
        <dbReference type="ChEBI" id="CHEBI:49883"/>
    </ligand>
</feature>
<feature type="binding site" evidence="1">
    <location>
        <position position="99"/>
    </location>
    <ligand>
        <name>[4Fe-4S] cluster</name>
        <dbReference type="ChEBI" id="CHEBI:49883"/>
    </ligand>
</feature>
<feature type="binding site" evidence="1">
    <location>
        <position position="102"/>
    </location>
    <ligand>
        <name>[4Fe-4S] cluster</name>
        <dbReference type="ChEBI" id="CHEBI:49883"/>
    </ligand>
</feature>
<feature type="binding site" evidence="1">
    <location>
        <position position="181"/>
    </location>
    <ligand>
        <name>[4Fe-4S] cluster</name>
        <dbReference type="ChEBI" id="CHEBI:49883"/>
    </ligand>
</feature>
<feature type="binding site" evidence="1">
    <location>
        <position position="289"/>
    </location>
    <ligand>
        <name>S-adenosyl-L-methionine</name>
        <dbReference type="ChEBI" id="CHEBI:59789"/>
    </ligand>
</feature>
<feature type="binding site" evidence="1">
    <location>
        <position position="318"/>
    </location>
    <ligand>
        <name>S-adenosyl-L-methionine</name>
        <dbReference type="ChEBI" id="CHEBI:59789"/>
    </ligand>
</feature>
<feature type="binding site" evidence="1">
    <location>
        <position position="323"/>
    </location>
    <ligand>
        <name>S-adenosyl-L-methionine</name>
        <dbReference type="ChEBI" id="CHEBI:59789"/>
    </ligand>
</feature>
<feature type="binding site" evidence="1">
    <location>
        <position position="339"/>
    </location>
    <ligand>
        <name>S-adenosyl-L-methionine</name>
        <dbReference type="ChEBI" id="CHEBI:59789"/>
    </ligand>
</feature>
<feature type="binding site" evidence="1">
    <location>
        <position position="367"/>
    </location>
    <ligand>
        <name>S-adenosyl-L-methionine</name>
        <dbReference type="ChEBI" id="CHEBI:59789"/>
    </ligand>
</feature>
<feature type="binding site" evidence="1">
    <location>
        <position position="388"/>
    </location>
    <ligand>
        <name>S-adenosyl-L-methionine</name>
        <dbReference type="ChEBI" id="CHEBI:59789"/>
    </ligand>
</feature>
<proteinExistence type="inferred from homology"/>
<dbReference type="EC" id="2.1.1.190" evidence="1"/>
<dbReference type="EMBL" id="CP000086">
    <property type="protein sequence ID" value="ABC37290.1"/>
    <property type="status" value="ALT_INIT"/>
    <property type="molecule type" value="Genomic_DNA"/>
</dbReference>
<dbReference type="RefSeq" id="WP_009890811.1">
    <property type="nucleotide sequence ID" value="NZ_CP008785.1"/>
</dbReference>
<dbReference type="SMR" id="Q2SWE9"/>
<dbReference type="GeneID" id="45121947"/>
<dbReference type="KEGG" id="bte:BTH_I2229"/>
<dbReference type="HOGENOM" id="CLU_014689_8_2_4"/>
<dbReference type="Proteomes" id="UP000001930">
    <property type="component" value="Chromosome I"/>
</dbReference>
<dbReference type="GO" id="GO:0051539">
    <property type="term" value="F:4 iron, 4 sulfur cluster binding"/>
    <property type="evidence" value="ECO:0007669"/>
    <property type="project" value="UniProtKB-KW"/>
</dbReference>
<dbReference type="GO" id="GO:0005506">
    <property type="term" value="F:iron ion binding"/>
    <property type="evidence" value="ECO:0007669"/>
    <property type="project" value="UniProtKB-UniRule"/>
</dbReference>
<dbReference type="GO" id="GO:0003723">
    <property type="term" value="F:RNA binding"/>
    <property type="evidence" value="ECO:0007669"/>
    <property type="project" value="InterPro"/>
</dbReference>
<dbReference type="GO" id="GO:0070041">
    <property type="term" value="F:rRNA (uridine-C5-)-methyltransferase activity"/>
    <property type="evidence" value="ECO:0007669"/>
    <property type="project" value="UniProtKB-UniRule"/>
</dbReference>
<dbReference type="GO" id="GO:0070475">
    <property type="term" value="P:rRNA base methylation"/>
    <property type="evidence" value="ECO:0007669"/>
    <property type="project" value="TreeGrafter"/>
</dbReference>
<dbReference type="CDD" id="cd02440">
    <property type="entry name" value="AdoMet_MTases"/>
    <property type="match status" value="1"/>
</dbReference>
<dbReference type="Gene3D" id="2.40.50.1070">
    <property type="match status" value="1"/>
</dbReference>
<dbReference type="Gene3D" id="2.40.50.140">
    <property type="entry name" value="Nucleic acid-binding proteins"/>
    <property type="match status" value="1"/>
</dbReference>
<dbReference type="Gene3D" id="3.40.50.150">
    <property type="entry name" value="Vaccinia Virus protein VP39"/>
    <property type="match status" value="1"/>
</dbReference>
<dbReference type="HAMAP" id="MF_01010">
    <property type="entry name" value="23SrRNA_methyltr_RlmD"/>
    <property type="match status" value="1"/>
</dbReference>
<dbReference type="InterPro" id="IPR001566">
    <property type="entry name" value="23S_rRNA_MeTrfase_RlmD"/>
</dbReference>
<dbReference type="InterPro" id="IPR030391">
    <property type="entry name" value="MeTrfase_TrmA_CS"/>
</dbReference>
<dbReference type="InterPro" id="IPR012340">
    <property type="entry name" value="NA-bd_OB-fold"/>
</dbReference>
<dbReference type="InterPro" id="IPR029063">
    <property type="entry name" value="SAM-dependent_MTases_sf"/>
</dbReference>
<dbReference type="InterPro" id="IPR002792">
    <property type="entry name" value="TRAM_dom"/>
</dbReference>
<dbReference type="InterPro" id="IPR010280">
    <property type="entry name" value="U5_MeTrfase_fam"/>
</dbReference>
<dbReference type="NCBIfam" id="NF009639">
    <property type="entry name" value="PRK13168.1"/>
    <property type="match status" value="1"/>
</dbReference>
<dbReference type="PANTHER" id="PTHR11061:SF49">
    <property type="entry name" value="23S RRNA (URACIL(1939)-C(5))-METHYLTRANSFERASE RLMD"/>
    <property type="match status" value="1"/>
</dbReference>
<dbReference type="PANTHER" id="PTHR11061">
    <property type="entry name" value="RNA M5U METHYLTRANSFERASE"/>
    <property type="match status" value="1"/>
</dbReference>
<dbReference type="Pfam" id="PF05958">
    <property type="entry name" value="tRNA_U5-meth_tr"/>
    <property type="match status" value="1"/>
</dbReference>
<dbReference type="SUPFAM" id="SSF50249">
    <property type="entry name" value="Nucleic acid-binding proteins"/>
    <property type="match status" value="1"/>
</dbReference>
<dbReference type="SUPFAM" id="SSF53335">
    <property type="entry name" value="S-adenosyl-L-methionine-dependent methyltransferases"/>
    <property type="match status" value="1"/>
</dbReference>
<dbReference type="PROSITE" id="PS51687">
    <property type="entry name" value="SAM_MT_RNA_M5U"/>
    <property type="match status" value="1"/>
</dbReference>
<dbReference type="PROSITE" id="PS50926">
    <property type="entry name" value="TRAM"/>
    <property type="match status" value="1"/>
</dbReference>
<dbReference type="PROSITE" id="PS01231">
    <property type="entry name" value="TRMA_2"/>
    <property type="match status" value="1"/>
</dbReference>
<name>RLMD_BURTA</name>
<evidence type="ECO:0000255" key="1">
    <source>
        <dbReference type="HAMAP-Rule" id="MF_01010"/>
    </source>
</evidence>
<evidence type="ECO:0000256" key="2">
    <source>
        <dbReference type="SAM" id="MobiDB-lite"/>
    </source>
</evidence>
<evidence type="ECO:0000305" key="3"/>
<organism>
    <name type="scientific">Burkholderia thailandensis (strain ATCC 700388 / DSM 13276 / CCUG 48851 / CIP 106301 / E264)</name>
    <dbReference type="NCBI Taxonomy" id="271848"/>
    <lineage>
        <taxon>Bacteria</taxon>
        <taxon>Pseudomonadati</taxon>
        <taxon>Pseudomonadota</taxon>
        <taxon>Betaproteobacteria</taxon>
        <taxon>Burkholderiales</taxon>
        <taxon>Burkholderiaceae</taxon>
        <taxon>Burkholderia</taxon>
        <taxon>pseudomallei group</taxon>
    </lineage>
</organism>
<sequence length="465" mass="50981">MSEAVPLSTPGASHAGAATDRAPVLDIDSLDMEARGVGRAVDENGEPGKVIFVEGALPGERVTYSSFRRKPTYEQAQVVDILRPSVMRTRPKCAFFGTCGGCSMQHLDMRAQVAIKQRVLEDNLWHLAKLRAEAMFAPIHGPSWGYRYRARLTVRHVAKKGGVLVGFHEKKSSYVADMTSCEVLPPHVSAMLVPLRRLVEQLSIRDRMPQIELAVGSQVTALVLRVLEPINAADETLLREFADAHRVQFWLQPKGPDTVAPFYPLDVQLDYTLPEFGIRMPFKPTDFTQVNHQINRVLVGRALRLLAPERGDRVLDLFCGIGNFTLPLARLAREVVGIEGSETLTSRALANAKENGVDGHTSFASRNLFEVTADDLHALGAFDKFLVDPPREGALAVSKALAEIAQSGEGPLPARIVYVSCNPSTLARDAGLLVHEAGYRLKGAGVVNMFPHTSHVESIALFERD</sequence>
<accession>Q2SWE9</accession>
<comment type="function">
    <text evidence="1">Catalyzes the formation of 5-methyl-uridine at position 1939 (m5U1939) in 23S rRNA.</text>
</comment>
<comment type="catalytic activity">
    <reaction evidence="1">
        <text>uridine(1939) in 23S rRNA + S-adenosyl-L-methionine = 5-methyluridine(1939) in 23S rRNA + S-adenosyl-L-homocysteine + H(+)</text>
        <dbReference type="Rhea" id="RHEA:42908"/>
        <dbReference type="Rhea" id="RHEA-COMP:10278"/>
        <dbReference type="Rhea" id="RHEA-COMP:10279"/>
        <dbReference type="ChEBI" id="CHEBI:15378"/>
        <dbReference type="ChEBI" id="CHEBI:57856"/>
        <dbReference type="ChEBI" id="CHEBI:59789"/>
        <dbReference type="ChEBI" id="CHEBI:65315"/>
        <dbReference type="ChEBI" id="CHEBI:74447"/>
        <dbReference type="EC" id="2.1.1.190"/>
    </reaction>
</comment>
<comment type="similarity">
    <text evidence="1">Belongs to the class I-like SAM-binding methyltransferase superfamily. RNA M5U methyltransferase family. RlmD subfamily.</text>
</comment>
<comment type="sequence caution" evidence="3">
    <conflict type="erroneous initiation">
        <sequence resource="EMBL-CDS" id="ABC37290"/>
    </conflict>
</comment>
<protein>
    <recommendedName>
        <fullName evidence="1">23S rRNA (uracil(1939)-C(5))-methyltransferase RlmD</fullName>
        <ecNumber evidence="1">2.1.1.190</ecNumber>
    </recommendedName>
    <alternativeName>
        <fullName evidence="1">23S rRNA(m5U1939)-methyltransferase</fullName>
    </alternativeName>
</protein>